<evidence type="ECO:0000255" key="1">
    <source>
        <dbReference type="HAMAP-Rule" id="MF_01177"/>
    </source>
</evidence>
<protein>
    <recommendedName>
        <fullName evidence="1">HTH-type transcriptional repressor NsrR</fullName>
    </recommendedName>
</protein>
<keyword id="KW-0001">2Fe-2S</keyword>
<keyword id="KW-0238">DNA-binding</keyword>
<keyword id="KW-0408">Iron</keyword>
<keyword id="KW-0411">Iron-sulfur</keyword>
<keyword id="KW-0479">Metal-binding</keyword>
<keyword id="KW-1185">Reference proteome</keyword>
<keyword id="KW-0678">Repressor</keyword>
<keyword id="KW-0804">Transcription</keyword>
<keyword id="KW-0805">Transcription regulation</keyword>
<accession>B7LC37</accession>
<dbReference type="EMBL" id="CU928145">
    <property type="protein sequence ID" value="CAV01655.1"/>
    <property type="molecule type" value="Genomic_DNA"/>
</dbReference>
<dbReference type="RefSeq" id="WP_001177639.1">
    <property type="nucleotide sequence ID" value="NZ_CP028304.1"/>
</dbReference>
<dbReference type="SMR" id="B7LC37"/>
<dbReference type="GeneID" id="93777643"/>
<dbReference type="KEGG" id="eck:EC55989_4733"/>
<dbReference type="HOGENOM" id="CLU_107144_2_1_6"/>
<dbReference type="Proteomes" id="UP000000746">
    <property type="component" value="Chromosome"/>
</dbReference>
<dbReference type="GO" id="GO:0005829">
    <property type="term" value="C:cytosol"/>
    <property type="evidence" value="ECO:0007669"/>
    <property type="project" value="TreeGrafter"/>
</dbReference>
<dbReference type="GO" id="GO:0051537">
    <property type="term" value="F:2 iron, 2 sulfur cluster binding"/>
    <property type="evidence" value="ECO:0007669"/>
    <property type="project" value="UniProtKB-KW"/>
</dbReference>
<dbReference type="GO" id="GO:0003700">
    <property type="term" value="F:DNA-binding transcription factor activity"/>
    <property type="evidence" value="ECO:0007669"/>
    <property type="project" value="UniProtKB-UniRule"/>
</dbReference>
<dbReference type="GO" id="GO:0003690">
    <property type="term" value="F:double-stranded DNA binding"/>
    <property type="evidence" value="ECO:0007669"/>
    <property type="project" value="UniProtKB-UniRule"/>
</dbReference>
<dbReference type="GO" id="GO:0005506">
    <property type="term" value="F:iron ion binding"/>
    <property type="evidence" value="ECO:0007669"/>
    <property type="project" value="UniProtKB-UniRule"/>
</dbReference>
<dbReference type="GO" id="GO:0045892">
    <property type="term" value="P:negative regulation of DNA-templated transcription"/>
    <property type="evidence" value="ECO:0007669"/>
    <property type="project" value="InterPro"/>
</dbReference>
<dbReference type="FunFam" id="1.10.10.10:FF:000105">
    <property type="entry name" value="HTH-type transcriptional repressor NsrR"/>
    <property type="match status" value="1"/>
</dbReference>
<dbReference type="Gene3D" id="1.10.10.10">
    <property type="entry name" value="Winged helix-like DNA-binding domain superfamily/Winged helix DNA-binding domain"/>
    <property type="match status" value="1"/>
</dbReference>
<dbReference type="HAMAP" id="MF_01177">
    <property type="entry name" value="HTH_type_NsrR"/>
    <property type="match status" value="1"/>
</dbReference>
<dbReference type="InterPro" id="IPR030489">
    <property type="entry name" value="TR_Rrf2-type_CS"/>
</dbReference>
<dbReference type="InterPro" id="IPR000944">
    <property type="entry name" value="Tscrpt_reg_Rrf2"/>
</dbReference>
<dbReference type="InterPro" id="IPR023761">
    <property type="entry name" value="Tscrpt_rep_HTH_NsrR"/>
</dbReference>
<dbReference type="InterPro" id="IPR036388">
    <property type="entry name" value="WH-like_DNA-bd_sf"/>
</dbReference>
<dbReference type="InterPro" id="IPR036390">
    <property type="entry name" value="WH_DNA-bd_sf"/>
</dbReference>
<dbReference type="NCBIfam" id="NF008240">
    <property type="entry name" value="PRK11014.1"/>
    <property type="match status" value="1"/>
</dbReference>
<dbReference type="NCBIfam" id="TIGR00738">
    <property type="entry name" value="rrf2_super"/>
    <property type="match status" value="1"/>
</dbReference>
<dbReference type="PANTHER" id="PTHR33221:SF4">
    <property type="entry name" value="HTH-TYPE TRANSCRIPTIONAL REPRESSOR NSRR"/>
    <property type="match status" value="1"/>
</dbReference>
<dbReference type="PANTHER" id="PTHR33221">
    <property type="entry name" value="WINGED HELIX-TURN-HELIX TRANSCRIPTIONAL REGULATOR, RRF2 FAMILY"/>
    <property type="match status" value="1"/>
</dbReference>
<dbReference type="Pfam" id="PF02082">
    <property type="entry name" value="Rrf2"/>
    <property type="match status" value="1"/>
</dbReference>
<dbReference type="SUPFAM" id="SSF46785">
    <property type="entry name" value="Winged helix' DNA-binding domain"/>
    <property type="match status" value="1"/>
</dbReference>
<dbReference type="PROSITE" id="PS01332">
    <property type="entry name" value="HTH_RRF2_1"/>
    <property type="match status" value="1"/>
</dbReference>
<dbReference type="PROSITE" id="PS51197">
    <property type="entry name" value="HTH_RRF2_2"/>
    <property type="match status" value="1"/>
</dbReference>
<organism>
    <name type="scientific">Escherichia coli (strain 55989 / EAEC)</name>
    <dbReference type="NCBI Taxonomy" id="585055"/>
    <lineage>
        <taxon>Bacteria</taxon>
        <taxon>Pseudomonadati</taxon>
        <taxon>Pseudomonadota</taxon>
        <taxon>Gammaproteobacteria</taxon>
        <taxon>Enterobacterales</taxon>
        <taxon>Enterobacteriaceae</taxon>
        <taxon>Escherichia</taxon>
    </lineage>
</organism>
<gene>
    <name evidence="1" type="primary">nsrR</name>
    <name type="ordered locus">EC55989_4733</name>
</gene>
<feature type="chain" id="PRO_1000164421" description="HTH-type transcriptional repressor NsrR">
    <location>
        <begin position="1"/>
        <end position="141"/>
    </location>
</feature>
<feature type="domain" description="HTH rrf2-type" evidence="1">
    <location>
        <begin position="2"/>
        <end position="129"/>
    </location>
</feature>
<feature type="DNA-binding region" description="H-T-H motif" evidence="1">
    <location>
        <begin position="28"/>
        <end position="51"/>
    </location>
</feature>
<feature type="binding site" evidence="1">
    <location>
        <position position="91"/>
    </location>
    <ligand>
        <name>[2Fe-2S] cluster</name>
        <dbReference type="ChEBI" id="CHEBI:190135"/>
    </ligand>
</feature>
<feature type="binding site" evidence="1">
    <location>
        <position position="96"/>
    </location>
    <ligand>
        <name>[2Fe-2S] cluster</name>
        <dbReference type="ChEBI" id="CHEBI:190135"/>
    </ligand>
</feature>
<feature type="binding site" evidence="1">
    <location>
        <position position="102"/>
    </location>
    <ligand>
        <name>[2Fe-2S] cluster</name>
        <dbReference type="ChEBI" id="CHEBI:190135"/>
    </ligand>
</feature>
<sequence length="141" mass="15593">MQLTSFTDYGLRALIYMASLPEGRMTSISEVTDVYGVSRNHMVKIINQLSRAGYVTAVRGKNGGIRLGKPASAIRIGDVVRELEPLSLVNCSSEFCHITPACRLKQALSKAVQSFLTELDNYTLADLVEENQPLYKLLLVE</sequence>
<reference key="1">
    <citation type="journal article" date="2009" name="PLoS Genet.">
        <title>Organised genome dynamics in the Escherichia coli species results in highly diverse adaptive paths.</title>
        <authorList>
            <person name="Touchon M."/>
            <person name="Hoede C."/>
            <person name="Tenaillon O."/>
            <person name="Barbe V."/>
            <person name="Baeriswyl S."/>
            <person name="Bidet P."/>
            <person name="Bingen E."/>
            <person name="Bonacorsi S."/>
            <person name="Bouchier C."/>
            <person name="Bouvet O."/>
            <person name="Calteau A."/>
            <person name="Chiapello H."/>
            <person name="Clermont O."/>
            <person name="Cruveiller S."/>
            <person name="Danchin A."/>
            <person name="Diard M."/>
            <person name="Dossat C."/>
            <person name="Karoui M.E."/>
            <person name="Frapy E."/>
            <person name="Garry L."/>
            <person name="Ghigo J.M."/>
            <person name="Gilles A.M."/>
            <person name="Johnson J."/>
            <person name="Le Bouguenec C."/>
            <person name="Lescat M."/>
            <person name="Mangenot S."/>
            <person name="Martinez-Jehanne V."/>
            <person name="Matic I."/>
            <person name="Nassif X."/>
            <person name="Oztas S."/>
            <person name="Petit M.A."/>
            <person name="Pichon C."/>
            <person name="Rouy Z."/>
            <person name="Ruf C.S."/>
            <person name="Schneider D."/>
            <person name="Tourret J."/>
            <person name="Vacherie B."/>
            <person name="Vallenet D."/>
            <person name="Medigue C."/>
            <person name="Rocha E.P.C."/>
            <person name="Denamur E."/>
        </authorList>
    </citation>
    <scope>NUCLEOTIDE SEQUENCE [LARGE SCALE GENOMIC DNA]</scope>
    <source>
        <strain>55989 / EAEC</strain>
    </source>
</reference>
<name>NSRR_ECO55</name>
<comment type="function">
    <text evidence="1">Nitric oxide-sensitive repressor of genes involved in protecting the cell against nitrosative stress. May require iron for activity.</text>
</comment>
<comment type="cofactor">
    <cofactor evidence="1">
        <name>[2Fe-2S] cluster</name>
        <dbReference type="ChEBI" id="CHEBI:190135"/>
    </cofactor>
    <text evidence="1">Binds 1 [2Fe-2S] cluster per subunit.</text>
</comment>
<proteinExistence type="inferred from homology"/>